<proteinExistence type="inferred from homology"/>
<keyword id="KW-0028">Amino-acid biosynthesis</keyword>
<keyword id="KW-0368">Histidine biosynthesis</keyword>
<keyword id="KW-0378">Hydrolase</keyword>
<keyword id="KW-0486">Methionine biosynthesis</keyword>
<keyword id="KW-0511">Multifunctional enzyme</keyword>
<keyword id="KW-0521">NADP</keyword>
<keyword id="KW-0554">One-carbon metabolism</keyword>
<keyword id="KW-0560">Oxidoreductase</keyword>
<keyword id="KW-0658">Purine biosynthesis</keyword>
<keyword id="KW-1185">Reference proteome</keyword>
<sequence>MQILDGKKLSQKIKESIKKEVEELKKEQDIIPGLAVILVGDDPASHTYVKMKARACKDVGIYSIVHEMPESISQKEIEETISMMNKNPNIDGILVQLPLPKHIDTTKILELIDPAKDVDGFHPYNFGRLMQGLDTFAPCTPLGVMELLDEYGIDVKGMNACVVGASNIVGKPMAALLLNRFATVDICHIYTKDLAEHTKKADIIAVGVGKPNLITADMVKERAIVIDIGINKVGNKIVGDVDFENVSKKASYITPVPGGVGPMTIAMLLKNTIKAAKQRKRS</sequence>
<protein>
    <recommendedName>
        <fullName evidence="1">Bifunctional protein FolD</fullName>
    </recommendedName>
    <domain>
        <recommendedName>
            <fullName evidence="1">Methylenetetrahydrofolate dehydrogenase</fullName>
            <ecNumber evidence="1">1.5.1.5</ecNumber>
        </recommendedName>
    </domain>
    <domain>
        <recommendedName>
            <fullName evidence="1">Methenyltetrahydrofolate cyclohydrolase</fullName>
            <ecNumber evidence="1">3.5.4.9</ecNumber>
        </recommendedName>
    </domain>
</protein>
<gene>
    <name evidence="1" type="primary">folD</name>
    <name type="ordered locus">NIS_0711</name>
</gene>
<evidence type="ECO:0000255" key="1">
    <source>
        <dbReference type="HAMAP-Rule" id="MF_01576"/>
    </source>
</evidence>
<reference key="1">
    <citation type="journal article" date="2007" name="Proc. Natl. Acad. Sci. U.S.A.">
        <title>Deep-sea vent epsilon-proteobacterial genomes provide insights into emergence of pathogens.</title>
        <authorList>
            <person name="Nakagawa S."/>
            <person name="Takaki Y."/>
            <person name="Shimamura S."/>
            <person name="Reysenbach A.-L."/>
            <person name="Takai K."/>
            <person name="Horikoshi K."/>
        </authorList>
    </citation>
    <scope>NUCLEOTIDE SEQUENCE [LARGE SCALE GENOMIC DNA]</scope>
    <source>
        <strain>SB155-2</strain>
    </source>
</reference>
<accession>A6Q2W6</accession>
<name>FOLD_NITSB</name>
<feature type="chain" id="PRO_0000305851" description="Bifunctional protein FolD">
    <location>
        <begin position="1"/>
        <end position="282"/>
    </location>
</feature>
<feature type="binding site" evidence="1">
    <location>
        <begin position="164"/>
        <end position="166"/>
    </location>
    <ligand>
        <name>NADP(+)</name>
        <dbReference type="ChEBI" id="CHEBI:58349"/>
    </ligand>
</feature>
<feature type="binding site" evidence="1">
    <location>
        <position position="189"/>
    </location>
    <ligand>
        <name>NADP(+)</name>
        <dbReference type="ChEBI" id="CHEBI:58349"/>
    </ligand>
</feature>
<feature type="binding site" evidence="1">
    <location>
        <position position="230"/>
    </location>
    <ligand>
        <name>NADP(+)</name>
        <dbReference type="ChEBI" id="CHEBI:58349"/>
    </ligand>
</feature>
<comment type="function">
    <text evidence="1">Catalyzes the oxidation of 5,10-methylenetetrahydrofolate to 5,10-methenyltetrahydrofolate and then the hydrolysis of 5,10-methenyltetrahydrofolate to 10-formyltetrahydrofolate.</text>
</comment>
<comment type="catalytic activity">
    <reaction evidence="1">
        <text>(6R)-5,10-methylene-5,6,7,8-tetrahydrofolate + NADP(+) = (6R)-5,10-methenyltetrahydrofolate + NADPH</text>
        <dbReference type="Rhea" id="RHEA:22812"/>
        <dbReference type="ChEBI" id="CHEBI:15636"/>
        <dbReference type="ChEBI" id="CHEBI:57455"/>
        <dbReference type="ChEBI" id="CHEBI:57783"/>
        <dbReference type="ChEBI" id="CHEBI:58349"/>
        <dbReference type="EC" id="1.5.1.5"/>
    </reaction>
</comment>
<comment type="catalytic activity">
    <reaction evidence="1">
        <text>(6R)-5,10-methenyltetrahydrofolate + H2O = (6R)-10-formyltetrahydrofolate + H(+)</text>
        <dbReference type="Rhea" id="RHEA:23700"/>
        <dbReference type="ChEBI" id="CHEBI:15377"/>
        <dbReference type="ChEBI" id="CHEBI:15378"/>
        <dbReference type="ChEBI" id="CHEBI:57455"/>
        <dbReference type="ChEBI" id="CHEBI:195366"/>
        <dbReference type="EC" id="3.5.4.9"/>
    </reaction>
</comment>
<comment type="pathway">
    <text evidence="1">One-carbon metabolism; tetrahydrofolate interconversion.</text>
</comment>
<comment type="subunit">
    <text evidence="1">Homodimer.</text>
</comment>
<comment type="similarity">
    <text evidence="1">Belongs to the tetrahydrofolate dehydrogenase/cyclohydrolase family.</text>
</comment>
<organism>
    <name type="scientific">Nitratiruptor sp. (strain SB155-2)</name>
    <dbReference type="NCBI Taxonomy" id="387092"/>
    <lineage>
        <taxon>Bacteria</taxon>
        <taxon>Pseudomonadati</taxon>
        <taxon>Campylobacterota</taxon>
        <taxon>Epsilonproteobacteria</taxon>
        <taxon>Nautiliales</taxon>
        <taxon>Nitratiruptoraceae</taxon>
        <taxon>Nitratiruptor</taxon>
    </lineage>
</organism>
<dbReference type="EC" id="1.5.1.5" evidence="1"/>
<dbReference type="EC" id="3.5.4.9" evidence="1"/>
<dbReference type="EMBL" id="AP009178">
    <property type="protein sequence ID" value="BAF69825.1"/>
    <property type="molecule type" value="Genomic_DNA"/>
</dbReference>
<dbReference type="RefSeq" id="WP_012082088.1">
    <property type="nucleotide sequence ID" value="NC_009662.1"/>
</dbReference>
<dbReference type="SMR" id="A6Q2W6"/>
<dbReference type="FunCoup" id="A6Q2W6">
    <property type="interactions" value="422"/>
</dbReference>
<dbReference type="STRING" id="387092.NIS_0711"/>
<dbReference type="KEGG" id="nis:NIS_0711"/>
<dbReference type="eggNOG" id="COG0190">
    <property type="taxonomic scope" value="Bacteria"/>
</dbReference>
<dbReference type="HOGENOM" id="CLU_034045_2_1_7"/>
<dbReference type="InParanoid" id="A6Q2W6"/>
<dbReference type="OrthoDB" id="9803580at2"/>
<dbReference type="UniPathway" id="UPA00193"/>
<dbReference type="Proteomes" id="UP000001118">
    <property type="component" value="Chromosome"/>
</dbReference>
<dbReference type="GO" id="GO:0005829">
    <property type="term" value="C:cytosol"/>
    <property type="evidence" value="ECO:0007669"/>
    <property type="project" value="TreeGrafter"/>
</dbReference>
<dbReference type="GO" id="GO:0004477">
    <property type="term" value="F:methenyltetrahydrofolate cyclohydrolase activity"/>
    <property type="evidence" value="ECO:0007669"/>
    <property type="project" value="UniProtKB-UniRule"/>
</dbReference>
<dbReference type="GO" id="GO:0004488">
    <property type="term" value="F:methylenetetrahydrofolate dehydrogenase (NADP+) activity"/>
    <property type="evidence" value="ECO:0007669"/>
    <property type="project" value="UniProtKB-UniRule"/>
</dbReference>
<dbReference type="GO" id="GO:0000105">
    <property type="term" value="P:L-histidine biosynthetic process"/>
    <property type="evidence" value="ECO:0007669"/>
    <property type="project" value="UniProtKB-KW"/>
</dbReference>
<dbReference type="GO" id="GO:0009086">
    <property type="term" value="P:methionine biosynthetic process"/>
    <property type="evidence" value="ECO:0007669"/>
    <property type="project" value="UniProtKB-KW"/>
</dbReference>
<dbReference type="GO" id="GO:0006164">
    <property type="term" value="P:purine nucleotide biosynthetic process"/>
    <property type="evidence" value="ECO:0007669"/>
    <property type="project" value="UniProtKB-KW"/>
</dbReference>
<dbReference type="GO" id="GO:0035999">
    <property type="term" value="P:tetrahydrofolate interconversion"/>
    <property type="evidence" value="ECO:0007669"/>
    <property type="project" value="UniProtKB-UniRule"/>
</dbReference>
<dbReference type="CDD" id="cd01080">
    <property type="entry name" value="NAD_bind_m-THF_DH_Cyclohyd"/>
    <property type="match status" value="1"/>
</dbReference>
<dbReference type="FunFam" id="3.40.50.10860:FF:000001">
    <property type="entry name" value="Bifunctional protein FolD"/>
    <property type="match status" value="1"/>
</dbReference>
<dbReference type="FunFam" id="3.40.50.720:FF:000094">
    <property type="entry name" value="Bifunctional protein FolD"/>
    <property type="match status" value="1"/>
</dbReference>
<dbReference type="Gene3D" id="3.40.50.10860">
    <property type="entry name" value="Leucine Dehydrogenase, chain A, domain 1"/>
    <property type="match status" value="1"/>
</dbReference>
<dbReference type="Gene3D" id="3.40.50.720">
    <property type="entry name" value="NAD(P)-binding Rossmann-like Domain"/>
    <property type="match status" value="1"/>
</dbReference>
<dbReference type="HAMAP" id="MF_01576">
    <property type="entry name" value="THF_DHG_CYH"/>
    <property type="match status" value="1"/>
</dbReference>
<dbReference type="InterPro" id="IPR046346">
    <property type="entry name" value="Aminoacid_DH-like_N_sf"/>
</dbReference>
<dbReference type="InterPro" id="IPR036291">
    <property type="entry name" value="NAD(P)-bd_dom_sf"/>
</dbReference>
<dbReference type="InterPro" id="IPR000672">
    <property type="entry name" value="THF_DH/CycHdrlase"/>
</dbReference>
<dbReference type="InterPro" id="IPR020630">
    <property type="entry name" value="THF_DH/CycHdrlase_cat_dom"/>
</dbReference>
<dbReference type="InterPro" id="IPR020867">
    <property type="entry name" value="THF_DH/CycHdrlase_CS"/>
</dbReference>
<dbReference type="InterPro" id="IPR020631">
    <property type="entry name" value="THF_DH/CycHdrlase_NAD-bd_dom"/>
</dbReference>
<dbReference type="NCBIfam" id="NF008058">
    <property type="entry name" value="PRK10792.1"/>
    <property type="match status" value="1"/>
</dbReference>
<dbReference type="NCBIfam" id="NF010780">
    <property type="entry name" value="PRK14183.1"/>
    <property type="match status" value="1"/>
</dbReference>
<dbReference type="NCBIfam" id="NF010783">
    <property type="entry name" value="PRK14186.1"/>
    <property type="match status" value="1"/>
</dbReference>
<dbReference type="NCBIfam" id="NF010787">
    <property type="entry name" value="PRK14191.1"/>
    <property type="match status" value="1"/>
</dbReference>
<dbReference type="PANTHER" id="PTHR48099:SF5">
    <property type="entry name" value="C-1-TETRAHYDROFOLATE SYNTHASE, CYTOPLASMIC"/>
    <property type="match status" value="1"/>
</dbReference>
<dbReference type="PANTHER" id="PTHR48099">
    <property type="entry name" value="C-1-TETRAHYDROFOLATE SYNTHASE, CYTOPLASMIC-RELATED"/>
    <property type="match status" value="1"/>
</dbReference>
<dbReference type="Pfam" id="PF00763">
    <property type="entry name" value="THF_DHG_CYH"/>
    <property type="match status" value="1"/>
</dbReference>
<dbReference type="Pfam" id="PF02882">
    <property type="entry name" value="THF_DHG_CYH_C"/>
    <property type="match status" value="1"/>
</dbReference>
<dbReference type="PRINTS" id="PR00085">
    <property type="entry name" value="THFDHDRGNASE"/>
</dbReference>
<dbReference type="SUPFAM" id="SSF53223">
    <property type="entry name" value="Aminoacid dehydrogenase-like, N-terminal domain"/>
    <property type="match status" value="1"/>
</dbReference>
<dbReference type="SUPFAM" id="SSF51735">
    <property type="entry name" value="NAD(P)-binding Rossmann-fold domains"/>
    <property type="match status" value="1"/>
</dbReference>
<dbReference type="PROSITE" id="PS00767">
    <property type="entry name" value="THF_DHG_CYH_2"/>
    <property type="match status" value="1"/>
</dbReference>